<sequence>MQKPKYKRIMLKISGEALAGEKKLGLDTDTINEISRNIKEVYDLGVEIAIVVGGGNFWRGRSGKGMDRTTADYMGMLATVINALGLQDALESQGMPTRVQTAIEMRQIAEPYIRRKAVRHLEKKRIVIFACGTGNPFFSTDTTAALRAAEIDAEVILLAKKVDGVYDSDPNINPNAKKFDKLSFMDVINKGLGVMDSTAASLCKDNNIPIIVFGLNEPGNIVKAVMGEKIGTIVM</sequence>
<proteinExistence type="inferred from homology"/>
<evidence type="ECO:0000255" key="1">
    <source>
        <dbReference type="HAMAP-Rule" id="MF_01220"/>
    </source>
</evidence>
<gene>
    <name evidence="1" type="primary">pyrH</name>
    <name type="ordered locus">Cthe_1004</name>
</gene>
<organism>
    <name type="scientific">Acetivibrio thermocellus (strain ATCC 27405 / DSM 1237 / JCM 9322 / NBRC 103400 / NCIMB 10682 / NRRL B-4536 / VPI 7372)</name>
    <name type="common">Clostridium thermocellum</name>
    <dbReference type="NCBI Taxonomy" id="203119"/>
    <lineage>
        <taxon>Bacteria</taxon>
        <taxon>Bacillati</taxon>
        <taxon>Bacillota</taxon>
        <taxon>Clostridia</taxon>
        <taxon>Eubacteriales</taxon>
        <taxon>Oscillospiraceae</taxon>
        <taxon>Acetivibrio</taxon>
    </lineage>
</organism>
<reference key="1">
    <citation type="submission" date="2007-02" db="EMBL/GenBank/DDBJ databases">
        <title>Complete sequence of Clostridium thermocellum ATCC 27405.</title>
        <authorList>
            <consortium name="US DOE Joint Genome Institute"/>
            <person name="Copeland A."/>
            <person name="Lucas S."/>
            <person name="Lapidus A."/>
            <person name="Barry K."/>
            <person name="Detter J.C."/>
            <person name="Glavina del Rio T."/>
            <person name="Hammon N."/>
            <person name="Israni S."/>
            <person name="Dalin E."/>
            <person name="Tice H."/>
            <person name="Pitluck S."/>
            <person name="Chertkov O."/>
            <person name="Brettin T."/>
            <person name="Bruce D."/>
            <person name="Han C."/>
            <person name="Tapia R."/>
            <person name="Gilna P."/>
            <person name="Schmutz J."/>
            <person name="Larimer F."/>
            <person name="Land M."/>
            <person name="Hauser L."/>
            <person name="Kyrpides N."/>
            <person name="Mikhailova N."/>
            <person name="Wu J.H.D."/>
            <person name="Newcomb M."/>
            <person name="Richardson P."/>
        </authorList>
    </citation>
    <scope>NUCLEOTIDE SEQUENCE [LARGE SCALE GENOMIC DNA]</scope>
    <source>
        <strain>ATCC 27405 / DSM 1237 / JCM 9322 / NBRC 103400 / NCIMB 10682 / NRRL B-4536 / VPI 7372</strain>
    </source>
</reference>
<keyword id="KW-0067">ATP-binding</keyword>
<keyword id="KW-0963">Cytoplasm</keyword>
<keyword id="KW-0418">Kinase</keyword>
<keyword id="KW-0547">Nucleotide-binding</keyword>
<keyword id="KW-0665">Pyrimidine biosynthesis</keyword>
<keyword id="KW-1185">Reference proteome</keyword>
<keyword id="KW-0808">Transferase</keyword>
<feature type="chain" id="PRO_1000053917" description="Uridylate kinase">
    <location>
        <begin position="1"/>
        <end position="235"/>
    </location>
</feature>
<feature type="binding site" evidence="1">
    <location>
        <begin position="12"/>
        <end position="15"/>
    </location>
    <ligand>
        <name>ATP</name>
        <dbReference type="ChEBI" id="CHEBI:30616"/>
    </ligand>
</feature>
<feature type="binding site" evidence="1">
    <location>
        <position position="54"/>
    </location>
    <ligand>
        <name>UMP</name>
        <dbReference type="ChEBI" id="CHEBI:57865"/>
    </ligand>
</feature>
<feature type="binding site" evidence="1">
    <location>
        <position position="55"/>
    </location>
    <ligand>
        <name>ATP</name>
        <dbReference type="ChEBI" id="CHEBI:30616"/>
    </ligand>
</feature>
<feature type="binding site" evidence="1">
    <location>
        <position position="59"/>
    </location>
    <ligand>
        <name>ATP</name>
        <dbReference type="ChEBI" id="CHEBI:30616"/>
    </ligand>
</feature>
<feature type="binding site" evidence="1">
    <location>
        <position position="72"/>
    </location>
    <ligand>
        <name>UMP</name>
        <dbReference type="ChEBI" id="CHEBI:57865"/>
    </ligand>
</feature>
<feature type="binding site" evidence="1">
    <location>
        <begin position="133"/>
        <end position="140"/>
    </location>
    <ligand>
        <name>UMP</name>
        <dbReference type="ChEBI" id="CHEBI:57865"/>
    </ligand>
</feature>
<feature type="binding site" evidence="1">
    <location>
        <position position="166"/>
    </location>
    <ligand>
        <name>ATP</name>
        <dbReference type="ChEBI" id="CHEBI:30616"/>
    </ligand>
</feature>
<feature type="binding site" evidence="1">
    <location>
        <position position="169"/>
    </location>
    <ligand>
        <name>ATP</name>
        <dbReference type="ChEBI" id="CHEBI:30616"/>
    </ligand>
</feature>
<protein>
    <recommendedName>
        <fullName evidence="1">Uridylate kinase</fullName>
        <shortName evidence="1">UK</shortName>
        <ecNumber evidence="1">2.7.4.22</ecNumber>
    </recommendedName>
    <alternativeName>
        <fullName evidence="1">Uridine monophosphate kinase</fullName>
        <shortName evidence="1">UMP kinase</shortName>
        <shortName evidence="1">UMPK</shortName>
    </alternativeName>
</protein>
<accession>A3DE57</accession>
<comment type="function">
    <text evidence="1">Catalyzes the reversible phosphorylation of UMP to UDP.</text>
</comment>
<comment type="catalytic activity">
    <reaction evidence="1">
        <text>UMP + ATP = UDP + ADP</text>
        <dbReference type="Rhea" id="RHEA:24400"/>
        <dbReference type="ChEBI" id="CHEBI:30616"/>
        <dbReference type="ChEBI" id="CHEBI:57865"/>
        <dbReference type="ChEBI" id="CHEBI:58223"/>
        <dbReference type="ChEBI" id="CHEBI:456216"/>
        <dbReference type="EC" id="2.7.4.22"/>
    </reaction>
</comment>
<comment type="activity regulation">
    <text evidence="1">Inhibited by UTP.</text>
</comment>
<comment type="pathway">
    <text evidence="1">Pyrimidine metabolism; CTP biosynthesis via de novo pathway; UDP from UMP (UMPK route): step 1/1.</text>
</comment>
<comment type="subunit">
    <text evidence="1">Homohexamer.</text>
</comment>
<comment type="subcellular location">
    <subcellularLocation>
        <location evidence="1">Cytoplasm</location>
    </subcellularLocation>
</comment>
<comment type="similarity">
    <text evidence="1">Belongs to the UMP kinase family.</text>
</comment>
<dbReference type="EC" id="2.7.4.22" evidence="1"/>
<dbReference type="EMBL" id="CP000568">
    <property type="protein sequence ID" value="ABN52236.1"/>
    <property type="molecule type" value="Genomic_DNA"/>
</dbReference>
<dbReference type="RefSeq" id="WP_003515563.1">
    <property type="nucleotide sequence ID" value="NC_009012.1"/>
</dbReference>
<dbReference type="SMR" id="A3DE57"/>
<dbReference type="STRING" id="203119.Cthe_1004"/>
<dbReference type="GeneID" id="35805789"/>
<dbReference type="KEGG" id="cth:Cthe_1004"/>
<dbReference type="eggNOG" id="COG0528">
    <property type="taxonomic scope" value="Bacteria"/>
</dbReference>
<dbReference type="HOGENOM" id="CLU_033861_0_0_9"/>
<dbReference type="OrthoDB" id="9807458at2"/>
<dbReference type="UniPathway" id="UPA00159">
    <property type="reaction ID" value="UER00275"/>
</dbReference>
<dbReference type="Proteomes" id="UP000002145">
    <property type="component" value="Chromosome"/>
</dbReference>
<dbReference type="GO" id="GO:0005737">
    <property type="term" value="C:cytoplasm"/>
    <property type="evidence" value="ECO:0007669"/>
    <property type="project" value="UniProtKB-SubCell"/>
</dbReference>
<dbReference type="GO" id="GO:0005524">
    <property type="term" value="F:ATP binding"/>
    <property type="evidence" value="ECO:0007669"/>
    <property type="project" value="UniProtKB-KW"/>
</dbReference>
<dbReference type="GO" id="GO:0033862">
    <property type="term" value="F:UMP kinase activity"/>
    <property type="evidence" value="ECO:0007669"/>
    <property type="project" value="UniProtKB-EC"/>
</dbReference>
<dbReference type="GO" id="GO:0044210">
    <property type="term" value="P:'de novo' CTP biosynthetic process"/>
    <property type="evidence" value="ECO:0007669"/>
    <property type="project" value="UniProtKB-UniRule"/>
</dbReference>
<dbReference type="GO" id="GO:0006225">
    <property type="term" value="P:UDP biosynthetic process"/>
    <property type="evidence" value="ECO:0007669"/>
    <property type="project" value="TreeGrafter"/>
</dbReference>
<dbReference type="CDD" id="cd04254">
    <property type="entry name" value="AAK_UMPK-PyrH-Ec"/>
    <property type="match status" value="1"/>
</dbReference>
<dbReference type="FunFam" id="3.40.1160.10:FF:000001">
    <property type="entry name" value="Uridylate kinase"/>
    <property type="match status" value="1"/>
</dbReference>
<dbReference type="Gene3D" id="3.40.1160.10">
    <property type="entry name" value="Acetylglutamate kinase-like"/>
    <property type="match status" value="1"/>
</dbReference>
<dbReference type="HAMAP" id="MF_01220_B">
    <property type="entry name" value="PyrH_B"/>
    <property type="match status" value="1"/>
</dbReference>
<dbReference type="InterPro" id="IPR036393">
    <property type="entry name" value="AceGlu_kinase-like_sf"/>
</dbReference>
<dbReference type="InterPro" id="IPR001048">
    <property type="entry name" value="Asp/Glu/Uridylate_kinase"/>
</dbReference>
<dbReference type="InterPro" id="IPR011817">
    <property type="entry name" value="Uridylate_kinase"/>
</dbReference>
<dbReference type="InterPro" id="IPR015963">
    <property type="entry name" value="Uridylate_kinase_bac"/>
</dbReference>
<dbReference type="NCBIfam" id="TIGR02075">
    <property type="entry name" value="pyrH_bact"/>
    <property type="match status" value="1"/>
</dbReference>
<dbReference type="PANTHER" id="PTHR42833">
    <property type="entry name" value="URIDYLATE KINASE"/>
    <property type="match status" value="1"/>
</dbReference>
<dbReference type="PANTHER" id="PTHR42833:SF4">
    <property type="entry name" value="URIDYLATE KINASE PUMPKIN, CHLOROPLASTIC"/>
    <property type="match status" value="1"/>
</dbReference>
<dbReference type="Pfam" id="PF00696">
    <property type="entry name" value="AA_kinase"/>
    <property type="match status" value="1"/>
</dbReference>
<dbReference type="PIRSF" id="PIRSF005650">
    <property type="entry name" value="Uridylate_kin"/>
    <property type="match status" value="1"/>
</dbReference>
<dbReference type="SUPFAM" id="SSF53633">
    <property type="entry name" value="Carbamate kinase-like"/>
    <property type="match status" value="1"/>
</dbReference>
<name>PYRH_ACET2</name>